<reference key="1">
    <citation type="journal article" date="1995" name="Science">
        <title>Whole-genome random sequencing and assembly of Haemophilus influenzae Rd.</title>
        <authorList>
            <person name="Fleischmann R.D."/>
            <person name="Adams M.D."/>
            <person name="White O."/>
            <person name="Clayton R.A."/>
            <person name="Kirkness E.F."/>
            <person name="Kerlavage A.R."/>
            <person name="Bult C.J."/>
            <person name="Tomb J.-F."/>
            <person name="Dougherty B.A."/>
            <person name="Merrick J.M."/>
            <person name="McKenney K."/>
            <person name="Sutton G.G."/>
            <person name="FitzHugh W."/>
            <person name="Fields C.A."/>
            <person name="Gocayne J.D."/>
            <person name="Scott J.D."/>
            <person name="Shirley R."/>
            <person name="Liu L.-I."/>
            <person name="Glodek A."/>
            <person name="Kelley J.M."/>
            <person name="Weidman J.F."/>
            <person name="Phillips C.A."/>
            <person name="Spriggs T."/>
            <person name="Hedblom E."/>
            <person name="Cotton M.D."/>
            <person name="Utterback T.R."/>
            <person name="Hanna M.C."/>
            <person name="Nguyen D.T."/>
            <person name="Saudek D.M."/>
            <person name="Brandon R.C."/>
            <person name="Fine L.D."/>
            <person name="Fritchman J.L."/>
            <person name="Fuhrmann J.L."/>
            <person name="Geoghagen N.S.M."/>
            <person name="Gnehm C.L."/>
            <person name="McDonald L.A."/>
            <person name="Small K.V."/>
            <person name="Fraser C.M."/>
            <person name="Smith H.O."/>
            <person name="Venter J.C."/>
        </authorList>
    </citation>
    <scope>NUCLEOTIDE SEQUENCE [LARGE SCALE GENOMIC DNA]</scope>
    <source>
        <strain>ATCC 51907 / DSM 11121 / KW20 / Rd</strain>
    </source>
</reference>
<name>SEQA_HAEIN</name>
<dbReference type="EMBL" id="L42023">
    <property type="protein sequence ID" value="AAC21861.1"/>
    <property type="molecule type" value="Genomic_DNA"/>
</dbReference>
<dbReference type="PIR" id="D64053">
    <property type="entry name" value="D64053"/>
</dbReference>
<dbReference type="RefSeq" id="NP_438362.1">
    <property type="nucleotide sequence ID" value="NC_000907.1"/>
</dbReference>
<dbReference type="SMR" id="P44564"/>
<dbReference type="STRING" id="71421.HI_0192"/>
<dbReference type="EnsemblBacteria" id="AAC21861">
    <property type="protein sequence ID" value="AAC21861"/>
    <property type="gene ID" value="HI_0192"/>
</dbReference>
<dbReference type="KEGG" id="hin:HI_0192"/>
<dbReference type="PATRIC" id="fig|71421.8.peg.198"/>
<dbReference type="eggNOG" id="COG3057">
    <property type="taxonomic scope" value="Bacteria"/>
</dbReference>
<dbReference type="HOGENOM" id="CLU_099733_0_0_6"/>
<dbReference type="OrthoDB" id="5591069at2"/>
<dbReference type="PhylomeDB" id="P44564"/>
<dbReference type="BioCyc" id="HINF71421:G1GJ1-204-MONOMER"/>
<dbReference type="Proteomes" id="UP000000579">
    <property type="component" value="Chromosome"/>
</dbReference>
<dbReference type="GO" id="GO:0005737">
    <property type="term" value="C:cytoplasm"/>
    <property type="evidence" value="ECO:0007669"/>
    <property type="project" value="UniProtKB-SubCell"/>
</dbReference>
<dbReference type="GO" id="GO:0003677">
    <property type="term" value="F:DNA binding"/>
    <property type="evidence" value="ECO:0007669"/>
    <property type="project" value="UniProtKB-UniRule"/>
</dbReference>
<dbReference type="GO" id="GO:0032297">
    <property type="term" value="P:negative regulation of DNA-templated DNA replication initiation"/>
    <property type="evidence" value="ECO:0007669"/>
    <property type="project" value="UniProtKB-UniRule"/>
</dbReference>
<dbReference type="GO" id="GO:0006355">
    <property type="term" value="P:regulation of DNA-templated transcription"/>
    <property type="evidence" value="ECO:0007669"/>
    <property type="project" value="InterPro"/>
</dbReference>
<dbReference type="Gene3D" id="1.10.1220.10">
    <property type="entry name" value="Met repressor-like"/>
    <property type="match status" value="1"/>
</dbReference>
<dbReference type="Gene3D" id="1.20.1380.10">
    <property type="entry name" value="Replication modulator SeqA, C-terminal DNA-binding domain"/>
    <property type="match status" value="1"/>
</dbReference>
<dbReference type="HAMAP" id="MF_00908">
    <property type="entry name" value="SeqA"/>
    <property type="match status" value="1"/>
</dbReference>
<dbReference type="InterPro" id="IPR013321">
    <property type="entry name" value="Arc_rbn_hlx_hlx"/>
</dbReference>
<dbReference type="InterPro" id="IPR010985">
    <property type="entry name" value="Ribbon_hlx_hlx"/>
</dbReference>
<dbReference type="InterPro" id="IPR005621">
    <property type="entry name" value="SeqA"/>
</dbReference>
<dbReference type="InterPro" id="IPR026577">
    <property type="entry name" value="SeqA_DNA-bd_C"/>
</dbReference>
<dbReference type="InterPro" id="IPR036835">
    <property type="entry name" value="SeqA_DNA-bd_C_sf"/>
</dbReference>
<dbReference type="InterPro" id="IPR033761">
    <property type="entry name" value="SeqA_N"/>
</dbReference>
<dbReference type="NCBIfam" id="NF008389">
    <property type="entry name" value="PRK11187.1"/>
    <property type="match status" value="1"/>
</dbReference>
<dbReference type="Pfam" id="PF03925">
    <property type="entry name" value="SeqA"/>
    <property type="match status" value="1"/>
</dbReference>
<dbReference type="Pfam" id="PF17206">
    <property type="entry name" value="SeqA_N"/>
    <property type="match status" value="1"/>
</dbReference>
<dbReference type="PIRSF" id="PIRSF019401">
    <property type="entry name" value="SeqA"/>
    <property type="match status" value="1"/>
</dbReference>
<dbReference type="SUPFAM" id="SSF82808">
    <property type="entry name" value="Replication modulator SeqA, C-terminal DNA-binding domain"/>
    <property type="match status" value="1"/>
</dbReference>
<dbReference type="SUPFAM" id="SSF47598">
    <property type="entry name" value="Ribbon-helix-helix"/>
    <property type="match status" value="1"/>
</dbReference>
<organism>
    <name type="scientific">Haemophilus influenzae (strain ATCC 51907 / DSM 11121 / KW20 / Rd)</name>
    <dbReference type="NCBI Taxonomy" id="71421"/>
    <lineage>
        <taxon>Bacteria</taxon>
        <taxon>Pseudomonadati</taxon>
        <taxon>Pseudomonadota</taxon>
        <taxon>Gammaproteobacteria</taxon>
        <taxon>Pasteurellales</taxon>
        <taxon>Pasteurellaceae</taxon>
        <taxon>Haemophilus</taxon>
    </lineage>
</organism>
<sequence>MKIIEVDEELYQYIASQTRSIGESASDILRRLLSLPVHTSIVNDLIITSAETDQKPKQAINVKEVNIKTTKKQSITAINQIVEKVQTLLNSTEFQEESKAVVRFLAILRVLYRTNPESFAQATESLQGRTRVYFARDEATLLMAGNHTKPKQIPDTPYWVITNTNSGRKMLMLEGAMQSMELPETLIDEVRSYFTVN</sequence>
<comment type="function">
    <text evidence="1">Negative regulator of replication initiation, which contributes to regulation of DNA replication and ensures that replication initiation occurs exactly once per chromosome per cell cycle. Binds to pairs of hemimethylated GATC sequences in the oriC region, thus preventing assembly of replication proteins and re-initiation at newly replicated origins. Repression is relieved when the region becomes fully methylated.</text>
</comment>
<comment type="subunit">
    <text evidence="1">Homodimer. Polymerizes to form helical filaments.</text>
</comment>
<comment type="subcellular location">
    <subcellularLocation>
        <location evidence="1">Cytoplasm</location>
    </subcellularLocation>
</comment>
<comment type="similarity">
    <text evidence="1">Belongs to the SeqA family.</text>
</comment>
<proteinExistence type="inferred from homology"/>
<keyword id="KW-0963">Cytoplasm</keyword>
<keyword id="KW-0236">DNA replication inhibitor</keyword>
<keyword id="KW-0238">DNA-binding</keyword>
<keyword id="KW-1185">Reference proteome</keyword>
<gene>
    <name evidence="1" type="primary">seqA</name>
    <name type="ordered locus">HI_0192</name>
</gene>
<protein>
    <recommendedName>
        <fullName evidence="1">Negative modulator of initiation of replication</fullName>
    </recommendedName>
</protein>
<accession>P44564</accession>
<feature type="chain" id="PRO_0000097687" description="Negative modulator of initiation of replication">
    <location>
        <begin position="1"/>
        <end position="197"/>
    </location>
</feature>
<feature type="region of interest" description="Interaction with DNA" evidence="1">
    <location>
        <begin position="100"/>
        <end position="101"/>
    </location>
</feature>
<feature type="region of interest" description="Interaction with DNA" evidence="1">
    <location>
        <begin position="129"/>
        <end position="133"/>
    </location>
</feature>
<feature type="region of interest" description="Interaction with DNA" evidence="1">
    <location>
        <begin position="163"/>
        <end position="169"/>
    </location>
</feature>
<evidence type="ECO:0000255" key="1">
    <source>
        <dbReference type="HAMAP-Rule" id="MF_00908"/>
    </source>
</evidence>